<comment type="function">
    <text evidence="1">Required for maturation of 30S ribosomal subunits.</text>
</comment>
<comment type="subcellular location">
    <subcellularLocation>
        <location evidence="1">Cytoplasm</location>
    </subcellularLocation>
</comment>
<comment type="similarity">
    <text evidence="1">Belongs to the RimP family.</text>
</comment>
<keyword id="KW-0963">Cytoplasm</keyword>
<keyword id="KW-1185">Reference proteome</keyword>
<keyword id="KW-0690">Ribosome biogenesis</keyword>
<gene>
    <name evidence="1" type="primary">rimP</name>
    <name type="ordered locus">SPD_0478</name>
</gene>
<feature type="chain" id="PRO_1000064780" description="Ribosome maturation factor RimP">
    <location>
        <begin position="1"/>
        <end position="159"/>
    </location>
</feature>
<protein>
    <recommendedName>
        <fullName evidence="1">Ribosome maturation factor RimP</fullName>
    </recommendedName>
</protein>
<accession>Q04LW4</accession>
<reference key="1">
    <citation type="journal article" date="2007" name="J. Bacteriol.">
        <title>Genome sequence of Avery's virulent serotype 2 strain D39 of Streptococcus pneumoniae and comparison with that of unencapsulated laboratory strain R6.</title>
        <authorList>
            <person name="Lanie J.A."/>
            <person name="Ng W.-L."/>
            <person name="Kazmierczak K.M."/>
            <person name="Andrzejewski T.M."/>
            <person name="Davidsen T.M."/>
            <person name="Wayne K.J."/>
            <person name="Tettelin H."/>
            <person name="Glass J.I."/>
            <person name="Winkler M.E."/>
        </authorList>
    </citation>
    <scope>NUCLEOTIDE SEQUENCE [LARGE SCALE GENOMIC DNA]</scope>
    <source>
        <strain>D39 / NCTC 7466</strain>
    </source>
</reference>
<sequence length="159" mass="17774">MDAIATIVELVREVVEPVIEAPFELVDIEYGKIGSDMILSIFVDKPEGITLNDTADLTEIISPVLDTIKPDPFPEQYFLEITSPGLERPLKTKDAVAGAVGKYIHVGLYQAIDKQKVFEGTLLAFEEDELTMEYMDKTRKKTVRIPYSLVSKARLAVKL</sequence>
<name>RIMP_STRP2</name>
<organism>
    <name type="scientific">Streptococcus pneumoniae serotype 2 (strain D39 / NCTC 7466)</name>
    <dbReference type="NCBI Taxonomy" id="373153"/>
    <lineage>
        <taxon>Bacteria</taxon>
        <taxon>Bacillati</taxon>
        <taxon>Bacillota</taxon>
        <taxon>Bacilli</taxon>
        <taxon>Lactobacillales</taxon>
        <taxon>Streptococcaceae</taxon>
        <taxon>Streptococcus</taxon>
    </lineage>
</organism>
<proteinExistence type="inferred from homology"/>
<evidence type="ECO:0000255" key="1">
    <source>
        <dbReference type="HAMAP-Rule" id="MF_01077"/>
    </source>
</evidence>
<dbReference type="EMBL" id="CP000410">
    <property type="protein sequence ID" value="ABJ54971.1"/>
    <property type="molecule type" value="Genomic_DNA"/>
</dbReference>
<dbReference type="RefSeq" id="WP_001810863.1">
    <property type="nucleotide sequence ID" value="NZ_JAMLJR010000001.1"/>
</dbReference>
<dbReference type="SMR" id="Q04LW4"/>
<dbReference type="PaxDb" id="373153-SPD_0478"/>
<dbReference type="KEGG" id="spd:SPD_0478"/>
<dbReference type="eggNOG" id="COG0779">
    <property type="taxonomic scope" value="Bacteria"/>
</dbReference>
<dbReference type="HOGENOM" id="CLU_070525_2_0_9"/>
<dbReference type="BioCyc" id="SPNE373153:G1G6V-527-MONOMER"/>
<dbReference type="Proteomes" id="UP000001452">
    <property type="component" value="Chromosome"/>
</dbReference>
<dbReference type="GO" id="GO:0005829">
    <property type="term" value="C:cytosol"/>
    <property type="evidence" value="ECO:0007669"/>
    <property type="project" value="TreeGrafter"/>
</dbReference>
<dbReference type="GO" id="GO:0000028">
    <property type="term" value="P:ribosomal small subunit assembly"/>
    <property type="evidence" value="ECO:0007669"/>
    <property type="project" value="TreeGrafter"/>
</dbReference>
<dbReference type="GO" id="GO:0006412">
    <property type="term" value="P:translation"/>
    <property type="evidence" value="ECO:0007669"/>
    <property type="project" value="TreeGrafter"/>
</dbReference>
<dbReference type="CDD" id="cd01734">
    <property type="entry name" value="YlxS_C"/>
    <property type="match status" value="1"/>
</dbReference>
<dbReference type="Gene3D" id="2.30.30.180">
    <property type="entry name" value="Ribosome maturation factor RimP, C-terminal domain"/>
    <property type="match status" value="1"/>
</dbReference>
<dbReference type="Gene3D" id="3.30.300.70">
    <property type="entry name" value="RimP-like superfamily, N-terminal"/>
    <property type="match status" value="1"/>
</dbReference>
<dbReference type="HAMAP" id="MF_01077">
    <property type="entry name" value="RimP"/>
    <property type="match status" value="1"/>
</dbReference>
<dbReference type="InterPro" id="IPR003728">
    <property type="entry name" value="Ribosome_maturation_RimP"/>
</dbReference>
<dbReference type="InterPro" id="IPR028998">
    <property type="entry name" value="RimP_C"/>
</dbReference>
<dbReference type="InterPro" id="IPR036847">
    <property type="entry name" value="RimP_C_sf"/>
</dbReference>
<dbReference type="InterPro" id="IPR028989">
    <property type="entry name" value="RimP_N"/>
</dbReference>
<dbReference type="InterPro" id="IPR035956">
    <property type="entry name" value="RimP_N_sf"/>
</dbReference>
<dbReference type="NCBIfam" id="NF000928">
    <property type="entry name" value="PRK00092.1-2"/>
    <property type="match status" value="1"/>
</dbReference>
<dbReference type="PANTHER" id="PTHR33867">
    <property type="entry name" value="RIBOSOME MATURATION FACTOR RIMP"/>
    <property type="match status" value="1"/>
</dbReference>
<dbReference type="PANTHER" id="PTHR33867:SF1">
    <property type="entry name" value="RIBOSOME MATURATION FACTOR RIMP"/>
    <property type="match status" value="1"/>
</dbReference>
<dbReference type="Pfam" id="PF17384">
    <property type="entry name" value="DUF150_C"/>
    <property type="match status" value="1"/>
</dbReference>
<dbReference type="Pfam" id="PF02576">
    <property type="entry name" value="RimP_N"/>
    <property type="match status" value="1"/>
</dbReference>
<dbReference type="SUPFAM" id="SSF74942">
    <property type="entry name" value="YhbC-like, C-terminal domain"/>
    <property type="match status" value="1"/>
</dbReference>
<dbReference type="SUPFAM" id="SSF75420">
    <property type="entry name" value="YhbC-like, N-terminal domain"/>
    <property type="match status" value="1"/>
</dbReference>